<reference key="1">
    <citation type="journal article" date="2006" name="J. Bacteriol.">
        <title>Complete genome sequence of the dehalorespiring bacterium Desulfitobacterium hafniense Y51 and comparison with Dehalococcoides ethenogenes 195.</title>
        <authorList>
            <person name="Nonaka H."/>
            <person name="Keresztes G."/>
            <person name="Shinoda Y."/>
            <person name="Ikenaga Y."/>
            <person name="Abe M."/>
            <person name="Naito K."/>
            <person name="Inatomi K."/>
            <person name="Furukawa K."/>
            <person name="Inui M."/>
            <person name="Yukawa H."/>
        </authorList>
    </citation>
    <scope>NUCLEOTIDE SEQUENCE [LARGE SCALE GENOMIC DNA]</scope>
    <source>
        <strain>Y51</strain>
    </source>
</reference>
<gene>
    <name evidence="1" type="primary">rpmI</name>
    <name type="ordered locus">DSY0268</name>
</gene>
<dbReference type="EMBL" id="AP008230">
    <property type="protein sequence ID" value="BAE82057.1"/>
    <property type="molecule type" value="Genomic_DNA"/>
</dbReference>
<dbReference type="RefSeq" id="WP_005808207.1">
    <property type="nucleotide sequence ID" value="NC_007907.1"/>
</dbReference>
<dbReference type="SMR" id="Q251I5"/>
<dbReference type="STRING" id="138119.DSY0268"/>
<dbReference type="KEGG" id="dsy:DSY0268"/>
<dbReference type="eggNOG" id="COG0291">
    <property type="taxonomic scope" value="Bacteria"/>
</dbReference>
<dbReference type="HOGENOM" id="CLU_169643_1_1_9"/>
<dbReference type="Proteomes" id="UP000001946">
    <property type="component" value="Chromosome"/>
</dbReference>
<dbReference type="GO" id="GO:0022625">
    <property type="term" value="C:cytosolic large ribosomal subunit"/>
    <property type="evidence" value="ECO:0007669"/>
    <property type="project" value="TreeGrafter"/>
</dbReference>
<dbReference type="GO" id="GO:0003735">
    <property type="term" value="F:structural constituent of ribosome"/>
    <property type="evidence" value="ECO:0007669"/>
    <property type="project" value="InterPro"/>
</dbReference>
<dbReference type="GO" id="GO:0006412">
    <property type="term" value="P:translation"/>
    <property type="evidence" value="ECO:0007669"/>
    <property type="project" value="UniProtKB-UniRule"/>
</dbReference>
<dbReference type="FunFam" id="4.10.410.60:FF:000001">
    <property type="entry name" value="50S ribosomal protein L35"/>
    <property type="match status" value="1"/>
</dbReference>
<dbReference type="Gene3D" id="4.10.410.60">
    <property type="match status" value="1"/>
</dbReference>
<dbReference type="HAMAP" id="MF_00514">
    <property type="entry name" value="Ribosomal_bL35"/>
    <property type="match status" value="1"/>
</dbReference>
<dbReference type="InterPro" id="IPR001706">
    <property type="entry name" value="Ribosomal_bL35"/>
</dbReference>
<dbReference type="InterPro" id="IPR021137">
    <property type="entry name" value="Ribosomal_bL35-like"/>
</dbReference>
<dbReference type="InterPro" id="IPR018265">
    <property type="entry name" value="Ribosomal_bL35_CS"/>
</dbReference>
<dbReference type="InterPro" id="IPR037229">
    <property type="entry name" value="Ribosomal_bL35_sf"/>
</dbReference>
<dbReference type="NCBIfam" id="TIGR00001">
    <property type="entry name" value="rpmI_bact"/>
    <property type="match status" value="1"/>
</dbReference>
<dbReference type="PANTHER" id="PTHR33343">
    <property type="entry name" value="54S RIBOSOMAL PROTEIN BL35M"/>
    <property type="match status" value="1"/>
</dbReference>
<dbReference type="PANTHER" id="PTHR33343:SF1">
    <property type="entry name" value="LARGE RIBOSOMAL SUBUNIT PROTEIN BL35M"/>
    <property type="match status" value="1"/>
</dbReference>
<dbReference type="Pfam" id="PF01632">
    <property type="entry name" value="Ribosomal_L35p"/>
    <property type="match status" value="1"/>
</dbReference>
<dbReference type="PRINTS" id="PR00064">
    <property type="entry name" value="RIBOSOMALL35"/>
</dbReference>
<dbReference type="SUPFAM" id="SSF143034">
    <property type="entry name" value="L35p-like"/>
    <property type="match status" value="1"/>
</dbReference>
<dbReference type="PROSITE" id="PS00936">
    <property type="entry name" value="RIBOSOMAL_L35"/>
    <property type="match status" value="1"/>
</dbReference>
<protein>
    <recommendedName>
        <fullName evidence="1">Large ribosomal subunit protein bL35</fullName>
    </recommendedName>
    <alternativeName>
        <fullName evidence="2">50S ribosomal protein L35</fullName>
    </alternativeName>
</protein>
<sequence>MPKMKTHRGAAKRFKKTGTGKIVRHHAFTSHILEKKSPKRKRNLRKGTVMHKTDAKRIARLVAYL</sequence>
<keyword id="KW-1185">Reference proteome</keyword>
<keyword id="KW-0687">Ribonucleoprotein</keyword>
<keyword id="KW-0689">Ribosomal protein</keyword>
<organism>
    <name type="scientific">Desulfitobacterium hafniense (strain Y51)</name>
    <dbReference type="NCBI Taxonomy" id="138119"/>
    <lineage>
        <taxon>Bacteria</taxon>
        <taxon>Bacillati</taxon>
        <taxon>Bacillota</taxon>
        <taxon>Clostridia</taxon>
        <taxon>Eubacteriales</taxon>
        <taxon>Desulfitobacteriaceae</taxon>
        <taxon>Desulfitobacterium</taxon>
    </lineage>
</organism>
<accession>Q251I5</accession>
<feature type="chain" id="PRO_0000258670" description="Large ribosomal subunit protein bL35">
    <location>
        <begin position="1"/>
        <end position="65"/>
    </location>
</feature>
<name>RL35_DESHY</name>
<comment type="similarity">
    <text evidence="1">Belongs to the bacterial ribosomal protein bL35 family.</text>
</comment>
<proteinExistence type="inferred from homology"/>
<evidence type="ECO:0000255" key="1">
    <source>
        <dbReference type="HAMAP-Rule" id="MF_00514"/>
    </source>
</evidence>
<evidence type="ECO:0000305" key="2"/>